<keyword id="KW-0067">ATP-binding</keyword>
<keyword id="KW-0997">Cell inner membrane</keyword>
<keyword id="KW-1003">Cell membrane</keyword>
<keyword id="KW-0472">Membrane</keyword>
<keyword id="KW-0547">Nucleotide-binding</keyword>
<keyword id="KW-1278">Translocase</keyword>
<keyword id="KW-0813">Transport</keyword>
<feature type="chain" id="PRO_0000272124" description="Lipoprotein-releasing system ATP-binding protein LolD">
    <location>
        <begin position="1"/>
        <end position="227"/>
    </location>
</feature>
<feature type="domain" description="ABC transporter" evidence="1">
    <location>
        <begin position="7"/>
        <end position="227"/>
    </location>
</feature>
<feature type="binding site" evidence="1">
    <location>
        <begin position="43"/>
        <end position="50"/>
    </location>
    <ligand>
        <name>ATP</name>
        <dbReference type="ChEBI" id="CHEBI:30616"/>
    </ligand>
</feature>
<comment type="function">
    <text evidence="1">Part of the ABC transporter complex LolCDE involved in the translocation of mature outer membrane-directed lipoproteins, from the inner membrane to the periplasmic chaperone, LolA. Responsible for the formation of the LolA-lipoprotein complex in an ATP-dependent manner.</text>
</comment>
<comment type="subunit">
    <text evidence="1">The complex is composed of two ATP-binding proteins (LolD) and two transmembrane proteins (LolC and LolE).</text>
</comment>
<comment type="subcellular location">
    <subcellularLocation>
        <location evidence="1">Cell inner membrane</location>
        <topology evidence="1">Peripheral membrane protein</topology>
    </subcellularLocation>
</comment>
<comment type="similarity">
    <text evidence="1">Belongs to the ABC transporter superfamily. Lipoprotein translocase (TC 3.A.1.125) family.</text>
</comment>
<comment type="sequence caution" evidence="2">
    <conflict type="erroneous initiation">
        <sequence resource="EMBL-CDS" id="AAY91249"/>
    </conflict>
</comment>
<accession>Q4KFA2</accession>
<sequence>MSEKAILSCRDLGKSYEEGPESVVVLSGLQLELHPGERVAIVGTSGSGKSTLLNLLGGLDTPSKGSVWLAGEELSALGEKARGKLRNRALGFVYQFHHLLPEFTALENVCMPLLIGRTPIPEARQRATALLERVGLGHRLEHKPAELSGGERQRVAIARALVNKPGLVMLDEPTGNLDSHTAQGIQDLMLELSTSMRTAFLVVTHDMNLARQMDRVLHLQEGHLVAI</sequence>
<dbReference type="EC" id="7.6.2.-" evidence="1"/>
<dbReference type="EMBL" id="CP000076">
    <property type="protein sequence ID" value="AAY91249.1"/>
    <property type="status" value="ALT_INIT"/>
    <property type="molecule type" value="Genomic_DNA"/>
</dbReference>
<dbReference type="RefSeq" id="WP_162470468.1">
    <property type="nucleotide sequence ID" value="NC_004129.6"/>
</dbReference>
<dbReference type="SMR" id="Q4KFA2"/>
<dbReference type="STRING" id="220664.PFL_1962"/>
<dbReference type="KEGG" id="pfl:PFL_1962"/>
<dbReference type="eggNOG" id="COG1136">
    <property type="taxonomic scope" value="Bacteria"/>
</dbReference>
<dbReference type="HOGENOM" id="CLU_000604_1_22_6"/>
<dbReference type="Proteomes" id="UP000008540">
    <property type="component" value="Chromosome"/>
</dbReference>
<dbReference type="GO" id="GO:0005886">
    <property type="term" value="C:plasma membrane"/>
    <property type="evidence" value="ECO:0007669"/>
    <property type="project" value="UniProtKB-SubCell"/>
</dbReference>
<dbReference type="GO" id="GO:0005524">
    <property type="term" value="F:ATP binding"/>
    <property type="evidence" value="ECO:0007669"/>
    <property type="project" value="UniProtKB-KW"/>
</dbReference>
<dbReference type="GO" id="GO:0016887">
    <property type="term" value="F:ATP hydrolysis activity"/>
    <property type="evidence" value="ECO:0007669"/>
    <property type="project" value="InterPro"/>
</dbReference>
<dbReference type="GO" id="GO:0022857">
    <property type="term" value="F:transmembrane transporter activity"/>
    <property type="evidence" value="ECO:0007669"/>
    <property type="project" value="TreeGrafter"/>
</dbReference>
<dbReference type="GO" id="GO:0044874">
    <property type="term" value="P:lipoprotein localization to outer membrane"/>
    <property type="evidence" value="ECO:0007669"/>
    <property type="project" value="TreeGrafter"/>
</dbReference>
<dbReference type="GO" id="GO:0089705">
    <property type="term" value="P:protein localization to outer membrane"/>
    <property type="evidence" value="ECO:0007669"/>
    <property type="project" value="TreeGrafter"/>
</dbReference>
<dbReference type="CDD" id="cd03255">
    <property type="entry name" value="ABC_MJ0796_LolCDE_FtsE"/>
    <property type="match status" value="1"/>
</dbReference>
<dbReference type="FunFam" id="3.40.50.300:FF:000230">
    <property type="entry name" value="Lipoprotein-releasing system ATP-binding protein LolD"/>
    <property type="match status" value="1"/>
</dbReference>
<dbReference type="Gene3D" id="3.40.50.300">
    <property type="entry name" value="P-loop containing nucleotide triphosphate hydrolases"/>
    <property type="match status" value="1"/>
</dbReference>
<dbReference type="InterPro" id="IPR003593">
    <property type="entry name" value="AAA+_ATPase"/>
</dbReference>
<dbReference type="InterPro" id="IPR003439">
    <property type="entry name" value="ABC_transporter-like_ATP-bd"/>
</dbReference>
<dbReference type="InterPro" id="IPR017871">
    <property type="entry name" value="ABC_transporter-like_CS"/>
</dbReference>
<dbReference type="InterPro" id="IPR015854">
    <property type="entry name" value="ABC_transpr_LolD-like"/>
</dbReference>
<dbReference type="InterPro" id="IPR011924">
    <property type="entry name" value="LolD_lipo_ATP-bd"/>
</dbReference>
<dbReference type="InterPro" id="IPR017911">
    <property type="entry name" value="MacB-like_ATP-bd"/>
</dbReference>
<dbReference type="InterPro" id="IPR027417">
    <property type="entry name" value="P-loop_NTPase"/>
</dbReference>
<dbReference type="NCBIfam" id="TIGR02211">
    <property type="entry name" value="LolD_lipo_ex"/>
    <property type="match status" value="1"/>
</dbReference>
<dbReference type="PANTHER" id="PTHR24220">
    <property type="entry name" value="IMPORT ATP-BINDING PROTEIN"/>
    <property type="match status" value="1"/>
</dbReference>
<dbReference type="PANTHER" id="PTHR24220:SF689">
    <property type="entry name" value="LIPOPROTEIN-RELEASING SYSTEM ATP-BINDING PROTEIN LOLD"/>
    <property type="match status" value="1"/>
</dbReference>
<dbReference type="Pfam" id="PF00005">
    <property type="entry name" value="ABC_tran"/>
    <property type="match status" value="1"/>
</dbReference>
<dbReference type="SMART" id="SM00382">
    <property type="entry name" value="AAA"/>
    <property type="match status" value="1"/>
</dbReference>
<dbReference type="SUPFAM" id="SSF52540">
    <property type="entry name" value="P-loop containing nucleoside triphosphate hydrolases"/>
    <property type="match status" value="1"/>
</dbReference>
<dbReference type="PROSITE" id="PS00211">
    <property type="entry name" value="ABC_TRANSPORTER_1"/>
    <property type="match status" value="1"/>
</dbReference>
<dbReference type="PROSITE" id="PS50893">
    <property type="entry name" value="ABC_TRANSPORTER_2"/>
    <property type="match status" value="1"/>
</dbReference>
<dbReference type="PROSITE" id="PS51244">
    <property type="entry name" value="LOLD"/>
    <property type="match status" value="1"/>
</dbReference>
<name>LOLD_PSEF5</name>
<protein>
    <recommendedName>
        <fullName evidence="1">Lipoprotein-releasing system ATP-binding protein LolD</fullName>
        <ecNumber evidence="1">7.6.2.-</ecNumber>
    </recommendedName>
</protein>
<proteinExistence type="inferred from homology"/>
<organism>
    <name type="scientific">Pseudomonas fluorescens (strain ATCC BAA-477 / NRRL B-23932 / Pf-5)</name>
    <dbReference type="NCBI Taxonomy" id="220664"/>
    <lineage>
        <taxon>Bacteria</taxon>
        <taxon>Pseudomonadati</taxon>
        <taxon>Pseudomonadota</taxon>
        <taxon>Gammaproteobacteria</taxon>
        <taxon>Pseudomonadales</taxon>
        <taxon>Pseudomonadaceae</taxon>
        <taxon>Pseudomonas</taxon>
    </lineage>
</organism>
<reference key="1">
    <citation type="journal article" date="2005" name="Nat. Biotechnol.">
        <title>Complete genome sequence of the plant commensal Pseudomonas fluorescens Pf-5.</title>
        <authorList>
            <person name="Paulsen I.T."/>
            <person name="Press C.M."/>
            <person name="Ravel J."/>
            <person name="Kobayashi D.Y."/>
            <person name="Myers G.S.A."/>
            <person name="Mavrodi D.V."/>
            <person name="DeBoy R.T."/>
            <person name="Seshadri R."/>
            <person name="Ren Q."/>
            <person name="Madupu R."/>
            <person name="Dodson R.J."/>
            <person name="Durkin A.S."/>
            <person name="Brinkac L.M."/>
            <person name="Daugherty S.C."/>
            <person name="Sullivan S.A."/>
            <person name="Rosovitz M.J."/>
            <person name="Gwinn M.L."/>
            <person name="Zhou L."/>
            <person name="Schneider D.J."/>
            <person name="Cartinhour S.W."/>
            <person name="Nelson W.C."/>
            <person name="Weidman J."/>
            <person name="Watkins K."/>
            <person name="Tran K."/>
            <person name="Khouri H."/>
            <person name="Pierson E.A."/>
            <person name="Pierson L.S. III"/>
            <person name="Thomashow L.S."/>
            <person name="Loper J.E."/>
        </authorList>
    </citation>
    <scope>NUCLEOTIDE SEQUENCE [LARGE SCALE GENOMIC DNA]</scope>
    <source>
        <strain>ATCC BAA-477 / NRRL B-23932 / Pf-5</strain>
    </source>
</reference>
<evidence type="ECO:0000255" key="1">
    <source>
        <dbReference type="HAMAP-Rule" id="MF_01708"/>
    </source>
</evidence>
<evidence type="ECO:0000305" key="2"/>
<gene>
    <name evidence="1" type="primary">lolD</name>
    <name type="ordered locus">PFL_1962</name>
</gene>